<organism>
    <name type="scientific">Pseudomonas putida</name>
    <name type="common">Arthrobacter siderocapsulatus</name>
    <dbReference type="NCBI Taxonomy" id="303"/>
    <lineage>
        <taxon>Bacteria</taxon>
        <taxon>Pseudomonadati</taxon>
        <taxon>Pseudomonadota</taxon>
        <taxon>Gammaproteobacteria</taxon>
        <taxon>Pseudomonadales</taxon>
        <taxon>Pseudomonadaceae</taxon>
        <taxon>Pseudomonas</taxon>
    </lineage>
</organism>
<evidence type="ECO:0000269" key="1">
    <source>
    </source>
</evidence>
<evidence type="ECO:0000269" key="2">
    <source>
    </source>
</evidence>
<evidence type="ECO:0000269" key="3">
    <source>
    </source>
</evidence>
<evidence type="ECO:0000303" key="4">
    <source>
    </source>
</evidence>
<evidence type="ECO:0000305" key="5"/>
<evidence type="ECO:0007829" key="6">
    <source>
        <dbReference type="PDB" id="3UOV"/>
    </source>
</evidence>
<evidence type="ECO:0007829" key="7">
    <source>
        <dbReference type="PDB" id="3UOX"/>
    </source>
</evidence>
<evidence type="ECO:0007829" key="8">
    <source>
        <dbReference type="PDB" id="3UOY"/>
    </source>
</evidence>
<evidence type="ECO:0007829" key="9">
    <source>
        <dbReference type="PDB" id="3UOZ"/>
    </source>
</evidence>
<comment type="function">
    <text evidence="1 2 3">Involved in the degradation of (+)-camphor. Catalyzes the lactonization of 2-oxo-delta(3)-4,5, 5-trimethylcyclopentenylacetyl-CoA (OT-CoA), a key intermediate in the metabolism of camphor. 2-Oxocyclopentyl ethyl acetate is also a good substrate, as is 2-oxocyclohexyl ethyl acetate and methyl-substituted cyclohexanones, but free acid is a poor substrate.</text>
</comment>
<comment type="catalytic activity">
    <reaction evidence="2 3">
        <text>[(1R)-2,2,3-trimethyl-5-oxocyclopent-3-enyl]acetyl-CoA + NADPH + O2 + H(+) = [(2R)-3,3,4-trimethyl-6-oxo-3,6-dihydro-1H-pyran-2-yl]acetyl-CoA + NADP(+) + H2O</text>
        <dbReference type="Rhea" id="RHEA:33015"/>
        <dbReference type="ChEBI" id="CHEBI:15377"/>
        <dbReference type="ChEBI" id="CHEBI:15378"/>
        <dbReference type="ChEBI" id="CHEBI:15379"/>
        <dbReference type="ChEBI" id="CHEBI:57783"/>
        <dbReference type="ChEBI" id="CHEBI:58349"/>
        <dbReference type="ChEBI" id="CHEBI:64784"/>
        <dbReference type="ChEBI" id="CHEBI:64785"/>
        <dbReference type="EC" id="1.14.13.160"/>
    </reaction>
</comment>
<comment type="cofactor">
    <cofactor evidence="1 3">
        <name>FAD</name>
        <dbReference type="ChEBI" id="CHEBI:57692"/>
    </cofactor>
    <text evidence="1 3">Binds 1 FAD per subunit.</text>
</comment>
<comment type="biophysicochemical properties">
    <kinetics>
        <KM evidence="1 2 3">0.018 mM for OT-CoA (at pH 9 and at 25 degrees Celsius)</KM>
        <KM evidence="1 2 3">0.032 mM for 2-n-hexyl cyclopentanone (at pH 9 and at 25 degrees Celsius)</KM>
        <KM evidence="1 2 3">0.16 mM for 2-oxocyclohexyl ethyl acetate (at pH 9 and at 25 degrees Celsius)</KM>
        <KM evidence="1 2 3">0.31 mM for 2-oxocyclopentyl ethyl acetate (at pH 9 and at 25 degrees Celsius)</KM>
        <KM evidence="1 2 3">0.6 mM for 4-methyl cyclohexanone (at pH 9 and at 25 degrees Celsius)</KM>
        <KM evidence="1 2 3">1.4 mM for 2-methyl cyclohexanone (at pH 9 and at 25 degrees Celsius)</KM>
    </kinetics>
    <phDependence>
        <text evidence="1 2 3">Optimum pH is 9.</text>
    </phDependence>
    <temperatureDependence>
        <text evidence="1 2 3">Optimum temperature is 20 degrees Celsius.</text>
    </temperatureDependence>
</comment>
<comment type="pathway">
    <text>Terpene metabolism; (R)-camphor degradation.</text>
</comment>
<comment type="subunit">
    <text evidence="1 3">Homodimer.</text>
</comment>
<comment type="induction">
    <text evidence="3">Induced by (+)-camphor and 2-oxo-delta(3)-4,5,5-trimethylcyclopentenylacetic acid.</text>
</comment>
<comment type="similarity">
    <text evidence="5">Belongs to the FAD-binding monooxygenase family.</text>
</comment>
<gene>
    <name type="primary">otemo</name>
    <name evidence="4" type="synonym">camG</name>
</gene>
<protein>
    <recommendedName>
        <fullName>2-oxo-Delta(3)-4,5,5-trimethylcyclopentenylacetyl-CoA monooxygenase</fullName>
        <shortName>OTEMO</shortName>
        <ecNumber>1.14.13.160</ecNumber>
    </recommendedName>
    <alternativeName>
        <fullName>(2,2,3-trimethyl-5-oxocyclopent-3-enyl)acetyl-CoA 1,5-monooxygenase</fullName>
    </alternativeName>
    <alternativeName>
        <fullName>MO2</fullName>
    </alternativeName>
</protein>
<dbReference type="EC" id="1.14.13.160"/>
<dbReference type="EMBL" id="JQ034405">
    <property type="protein sequence ID" value="AEZ35248.1"/>
    <property type="molecule type" value="Genomic_DNA"/>
</dbReference>
<dbReference type="EMBL" id="AB771747">
    <property type="protein sequence ID" value="BAN13280.1"/>
    <property type="molecule type" value="Genomic_DNA"/>
</dbReference>
<dbReference type="PDB" id="3UOV">
    <property type="method" value="X-ray"/>
    <property type="resolution" value="2.04 A"/>
    <property type="chains" value="A/B=1-545"/>
</dbReference>
<dbReference type="PDB" id="3UOX">
    <property type="method" value="X-ray"/>
    <property type="resolution" value="1.96 A"/>
    <property type="chains" value="A/B=1-545"/>
</dbReference>
<dbReference type="PDB" id="3UOY">
    <property type="method" value="X-ray"/>
    <property type="resolution" value="2.00 A"/>
    <property type="chains" value="A/B=1-545"/>
</dbReference>
<dbReference type="PDB" id="3UOZ">
    <property type="method" value="X-ray"/>
    <property type="resolution" value="2.41 A"/>
    <property type="chains" value="A/B=1-545"/>
</dbReference>
<dbReference type="PDB" id="3UP4">
    <property type="method" value="X-ray"/>
    <property type="resolution" value="2.80 A"/>
    <property type="chains" value="A/B=1-545"/>
</dbReference>
<dbReference type="PDB" id="3UP5">
    <property type="method" value="X-ray"/>
    <property type="resolution" value="2.45 A"/>
    <property type="chains" value="A/B=1-545"/>
</dbReference>
<dbReference type="PDBsum" id="3UOV"/>
<dbReference type="PDBsum" id="3UOX"/>
<dbReference type="PDBsum" id="3UOY"/>
<dbReference type="PDBsum" id="3UOZ"/>
<dbReference type="PDBsum" id="3UP4"/>
<dbReference type="PDBsum" id="3UP5"/>
<dbReference type="SMR" id="H3JQW0"/>
<dbReference type="KEGG" id="ag:AEZ35248"/>
<dbReference type="KEGG" id="ag:BAN13280"/>
<dbReference type="BRENDA" id="1.14.13.160">
    <property type="organism ID" value="5092"/>
</dbReference>
<dbReference type="UniPathway" id="UPA00719"/>
<dbReference type="EvolutionaryTrace" id="H3JQW0"/>
<dbReference type="GO" id="GO:0071949">
    <property type="term" value="F:FAD binding"/>
    <property type="evidence" value="ECO:0000314"/>
    <property type="project" value="UniProtKB"/>
</dbReference>
<dbReference type="GO" id="GO:0042802">
    <property type="term" value="F:identical protein binding"/>
    <property type="evidence" value="ECO:0000314"/>
    <property type="project" value="UniProtKB"/>
</dbReference>
<dbReference type="GO" id="GO:0004497">
    <property type="term" value="F:monooxygenase activity"/>
    <property type="evidence" value="ECO:0000314"/>
    <property type="project" value="UniProtKB"/>
</dbReference>
<dbReference type="GO" id="GO:0050661">
    <property type="term" value="F:NADP binding"/>
    <property type="evidence" value="ECO:0000314"/>
    <property type="project" value="UniProtKB"/>
</dbReference>
<dbReference type="GO" id="GO:0042803">
    <property type="term" value="F:protein homodimerization activity"/>
    <property type="evidence" value="ECO:0000314"/>
    <property type="project" value="UniProtKB"/>
</dbReference>
<dbReference type="GO" id="GO:0019383">
    <property type="term" value="P:(+)-camphor catabolic process"/>
    <property type="evidence" value="ECO:0000314"/>
    <property type="project" value="UniProtKB"/>
</dbReference>
<dbReference type="Gene3D" id="3.50.50.60">
    <property type="entry name" value="FAD/NAD(P)-binding domain"/>
    <property type="match status" value="2"/>
</dbReference>
<dbReference type="InterPro" id="IPR050775">
    <property type="entry name" value="FAD-binding_Monooxygenases"/>
</dbReference>
<dbReference type="InterPro" id="IPR036188">
    <property type="entry name" value="FAD/NAD-bd_sf"/>
</dbReference>
<dbReference type="InterPro" id="IPR023753">
    <property type="entry name" value="FAD/NAD-binding_dom"/>
</dbReference>
<dbReference type="PANTHER" id="PTHR43098">
    <property type="entry name" value="L-ORNITHINE N(5)-MONOOXYGENASE-RELATED"/>
    <property type="match status" value="1"/>
</dbReference>
<dbReference type="PANTHER" id="PTHR43098:SF3">
    <property type="entry name" value="L-ORNITHINE N(5)-MONOOXYGENASE-RELATED"/>
    <property type="match status" value="1"/>
</dbReference>
<dbReference type="Pfam" id="PF07992">
    <property type="entry name" value="Pyr_redox_2"/>
    <property type="match status" value="1"/>
</dbReference>
<dbReference type="SUPFAM" id="SSF51905">
    <property type="entry name" value="FAD/NAD(P)-binding domain"/>
    <property type="match status" value="2"/>
</dbReference>
<feature type="chain" id="PRO_0000422223" description="2-oxo-Delta(3)-4,5,5-trimethylcyclopentenylacetyl-CoA monooxygenase">
    <location>
        <begin position="1"/>
        <end position="545"/>
    </location>
</feature>
<feature type="binding site" evidence="1">
    <location>
        <position position="20"/>
    </location>
    <ligand>
        <name>FAD</name>
        <dbReference type="ChEBI" id="CHEBI:57692"/>
    </ligand>
</feature>
<feature type="binding site" evidence="1">
    <location>
        <position position="39"/>
    </location>
    <ligand>
        <name>FAD</name>
        <dbReference type="ChEBI" id="CHEBI:57692"/>
    </ligand>
</feature>
<feature type="binding site" evidence="1">
    <location>
        <begin position="47"/>
        <end position="50"/>
    </location>
    <ligand>
        <name>FAD</name>
        <dbReference type="ChEBI" id="CHEBI:57692"/>
    </ligand>
</feature>
<feature type="binding site" evidence="1">
    <location>
        <begin position="57"/>
        <end position="59"/>
    </location>
    <ligand>
        <name>NADP(+)</name>
        <dbReference type="ChEBI" id="CHEBI:58349"/>
    </ligand>
</feature>
<feature type="binding site" evidence="1">
    <location>
        <begin position="59"/>
        <end position="60"/>
    </location>
    <ligand>
        <name>FAD</name>
        <dbReference type="ChEBI" id="CHEBI:57692"/>
    </ligand>
</feature>
<feature type="binding site" evidence="1">
    <location>
        <position position="65"/>
    </location>
    <ligand>
        <name>FAD</name>
        <dbReference type="ChEBI" id="CHEBI:57692"/>
    </ligand>
</feature>
<feature type="binding site" evidence="1">
    <location>
        <position position="112"/>
    </location>
    <ligand>
        <name>FAD</name>
        <dbReference type="ChEBI" id="CHEBI:57692"/>
    </ligand>
</feature>
<feature type="binding site" evidence="1">
    <location>
        <begin position="193"/>
        <end position="199"/>
    </location>
    <ligand>
        <name>NADP(+)</name>
        <dbReference type="ChEBI" id="CHEBI:58349"/>
    </ligand>
</feature>
<feature type="binding site" evidence="1">
    <location>
        <begin position="216"/>
        <end position="217"/>
    </location>
    <ligand>
        <name>NADP(+)</name>
        <dbReference type="ChEBI" id="CHEBI:58349"/>
    </ligand>
</feature>
<feature type="binding site" evidence="1">
    <location>
        <position position="446"/>
    </location>
    <ligand>
        <name>FAD</name>
        <dbReference type="ChEBI" id="CHEBI:57692"/>
    </ligand>
</feature>
<feature type="binding site" evidence="1">
    <location>
        <position position="501"/>
    </location>
    <ligand>
        <name>NADP(+)</name>
        <dbReference type="ChEBI" id="CHEBI:58349"/>
    </ligand>
</feature>
<feature type="site" description="Transition state stabilizer" evidence="1">
    <location>
        <position position="337"/>
    </location>
</feature>
<feature type="mutagenesis site" description="Loss of monooxygenase activity." evidence="1">
    <original>Y</original>
    <variation>A</variation>
    <location>
        <position position="53"/>
    </location>
</feature>
<feature type="mutagenesis site" description="Retains 32% of monooxygenase activity." evidence="1">
    <original>Y</original>
    <variation>F</variation>
    <location>
        <position position="53"/>
    </location>
</feature>
<feature type="mutagenesis site" description="Loss of monooxygenase activity." evidence="1">
    <original>D</original>
    <variation>A</variation>
    <location>
        <position position="59"/>
    </location>
</feature>
<feature type="mutagenesis site" description="Loss of monooxygenase activity." evidence="1">
    <original>D</original>
    <variation>N</variation>
    <location>
        <position position="59"/>
    </location>
</feature>
<feature type="mutagenesis site" description="Loss of monooxygenase activity." evidence="1">
    <original>R</original>
    <variation>A</variation>
    <location>
        <position position="337"/>
    </location>
</feature>
<feature type="mutagenesis site" description="Loss of monooxygenase activity." evidence="1">
    <original>R</original>
    <variation>K</variation>
    <location>
        <position position="337"/>
    </location>
</feature>
<feature type="strand" evidence="7">
    <location>
        <begin position="9"/>
        <end position="15"/>
    </location>
</feature>
<feature type="helix" evidence="7">
    <location>
        <begin position="19"/>
        <end position="30"/>
    </location>
</feature>
<feature type="strand" evidence="7">
    <location>
        <begin position="35"/>
        <end position="38"/>
    </location>
</feature>
<feature type="strand" evidence="7">
    <location>
        <begin position="40"/>
        <end position="44"/>
    </location>
</feature>
<feature type="helix" evidence="7">
    <location>
        <begin position="47"/>
        <end position="50"/>
    </location>
</feature>
<feature type="helix" evidence="7">
    <location>
        <begin position="62"/>
        <end position="65"/>
    </location>
</feature>
<feature type="helix" evidence="7">
    <location>
        <begin position="67"/>
        <end position="70"/>
    </location>
</feature>
<feature type="strand" evidence="7">
    <location>
        <begin position="80"/>
        <end position="83"/>
    </location>
</feature>
<feature type="helix" evidence="7">
    <location>
        <begin position="86"/>
        <end position="100"/>
    </location>
</feature>
<feature type="helix" evidence="7">
    <location>
        <begin position="103"/>
        <end position="105"/>
    </location>
</feature>
<feature type="strand" evidence="9">
    <location>
        <begin position="106"/>
        <end position="109"/>
    </location>
</feature>
<feature type="strand" evidence="7">
    <location>
        <begin position="112"/>
        <end position="118"/>
    </location>
</feature>
<feature type="helix" evidence="7">
    <location>
        <begin position="119"/>
        <end position="121"/>
    </location>
</feature>
<feature type="strand" evidence="7">
    <location>
        <begin position="123"/>
        <end position="128"/>
    </location>
</feature>
<feature type="turn" evidence="7">
    <location>
        <begin position="129"/>
        <end position="131"/>
    </location>
</feature>
<feature type="strand" evidence="7">
    <location>
        <begin position="132"/>
        <end position="141"/>
    </location>
</feature>
<feature type="helix" evidence="7">
    <location>
        <begin position="157"/>
        <end position="159"/>
    </location>
</feature>
<feature type="strand" evidence="7">
    <location>
        <begin position="162"/>
        <end position="166"/>
    </location>
</feature>
<feature type="helix" evidence="7">
    <location>
        <begin position="167"/>
        <end position="169"/>
    </location>
</feature>
<feature type="strand" evidence="6">
    <location>
        <begin position="174"/>
        <end position="176"/>
    </location>
</feature>
<feature type="strand" evidence="9">
    <location>
        <begin position="178"/>
        <end position="180"/>
    </location>
</feature>
<feature type="strand" evidence="7">
    <location>
        <begin position="187"/>
        <end position="191"/>
    </location>
</feature>
<feature type="helix" evidence="7">
    <location>
        <begin position="195"/>
        <end position="204"/>
    </location>
</feature>
<feature type="turn" evidence="7">
    <location>
        <begin position="205"/>
        <end position="207"/>
    </location>
</feature>
<feature type="strand" evidence="7">
    <location>
        <begin position="208"/>
        <end position="217"/>
    </location>
</feature>
<feature type="helix" evidence="7">
    <location>
        <begin position="231"/>
        <end position="239"/>
    </location>
</feature>
<feature type="helix" evidence="7">
    <location>
        <begin position="241"/>
        <end position="248"/>
    </location>
</feature>
<feature type="strand" evidence="7">
    <location>
        <begin position="251"/>
        <end position="256"/>
    </location>
</feature>
<feature type="strand" evidence="7">
    <location>
        <begin position="260"/>
        <end position="262"/>
    </location>
</feature>
<feature type="helix" evidence="7">
    <location>
        <begin position="264"/>
        <end position="266"/>
    </location>
</feature>
<feature type="helix" evidence="7">
    <location>
        <begin position="269"/>
        <end position="281"/>
    </location>
</feature>
<feature type="strand" evidence="7">
    <location>
        <begin position="282"/>
        <end position="284"/>
    </location>
</feature>
<feature type="helix" evidence="7">
    <location>
        <begin position="286"/>
        <end position="289"/>
    </location>
</feature>
<feature type="strand" evidence="9">
    <location>
        <begin position="290"/>
        <end position="292"/>
    </location>
</feature>
<feature type="turn" evidence="7">
    <location>
        <begin position="293"/>
        <end position="297"/>
    </location>
</feature>
<feature type="helix" evidence="7">
    <location>
        <begin position="299"/>
        <end position="316"/>
    </location>
</feature>
<feature type="helix" evidence="7">
    <location>
        <begin position="320"/>
        <end position="325"/>
    </location>
</feature>
<feature type="strand" evidence="7">
    <location>
        <begin position="329"/>
        <end position="331"/>
    </location>
</feature>
<feature type="strand" evidence="7">
    <location>
        <begin position="340"/>
        <end position="343"/>
    </location>
</feature>
<feature type="helix" evidence="7">
    <location>
        <begin position="344"/>
        <end position="347"/>
    </location>
</feature>
<feature type="strand" evidence="7">
    <location>
        <begin position="353"/>
        <end position="357"/>
    </location>
</feature>
<feature type="turn" evidence="7">
    <location>
        <begin position="358"/>
        <end position="360"/>
    </location>
</feature>
<feature type="strand" evidence="7">
    <location>
        <begin position="363"/>
        <end position="367"/>
    </location>
</feature>
<feature type="strand" evidence="7">
    <location>
        <begin position="370"/>
        <end position="375"/>
    </location>
</feature>
<feature type="strand" evidence="7">
    <location>
        <begin position="377"/>
        <end position="379"/>
    </location>
</feature>
<feature type="strand" evidence="7">
    <location>
        <begin position="381"/>
        <end position="385"/>
    </location>
</feature>
<feature type="strand" evidence="7">
    <location>
        <begin position="390"/>
        <end position="393"/>
    </location>
</feature>
<feature type="helix" evidence="8">
    <location>
        <begin position="395"/>
        <end position="398"/>
    </location>
</feature>
<feature type="strand" evidence="7">
    <location>
        <begin position="399"/>
        <end position="402"/>
    </location>
</feature>
<feature type="helix" evidence="7">
    <location>
        <begin position="404"/>
        <end position="406"/>
    </location>
</feature>
<feature type="helix" evidence="7">
    <location>
        <begin position="409"/>
        <end position="412"/>
    </location>
</feature>
<feature type="turn" evidence="7">
    <location>
        <begin position="413"/>
        <end position="415"/>
    </location>
</feature>
<feature type="turn" evidence="7">
    <location>
        <begin position="421"/>
        <end position="423"/>
    </location>
</feature>
<feature type="strand" evidence="7">
    <location>
        <begin position="431"/>
        <end position="433"/>
    </location>
</feature>
<feature type="helix" evidence="7">
    <location>
        <begin position="437"/>
        <end position="439"/>
    </location>
</feature>
<feature type="helix" evidence="7">
    <location>
        <begin position="441"/>
        <end position="443"/>
    </location>
</feature>
<feature type="helix" evidence="7">
    <location>
        <begin position="446"/>
        <end position="467"/>
    </location>
</feature>
<feature type="strand" evidence="7">
    <location>
        <begin position="472"/>
        <end position="474"/>
    </location>
</feature>
<feature type="helix" evidence="7">
    <location>
        <begin position="476"/>
        <end position="491"/>
    </location>
</feature>
<feature type="helix" evidence="7">
    <location>
        <begin position="495"/>
        <end position="498"/>
    </location>
</feature>
<feature type="helix" evidence="7">
    <location>
        <begin position="500"/>
        <end position="502"/>
    </location>
</feature>
<feature type="strand" evidence="7">
    <location>
        <begin position="503"/>
        <end position="507"/>
    </location>
</feature>
<feature type="strand" evidence="7">
    <location>
        <begin position="509"/>
        <end position="511"/>
    </location>
</feature>
<feature type="strand" evidence="7">
    <location>
        <begin position="513"/>
        <end position="519"/>
    </location>
</feature>
<feature type="helix" evidence="7">
    <location>
        <begin position="524"/>
        <end position="536"/>
    </location>
</feature>
<feature type="turn" evidence="7">
    <location>
        <begin position="537"/>
        <end position="541"/>
    </location>
</feature>
<feature type="strand" evidence="7">
    <location>
        <begin position="542"/>
        <end position="544"/>
    </location>
</feature>
<proteinExistence type="evidence at protein level"/>
<geneLocation type="plasmid">
    <name>CAM</name>
</geneLocation>
<accession>H3JQW0</accession>
<accession>M5AXJ6</accession>
<sequence>MSNRAKSPALDAVVIGAGVTGIYQAFLINQAGMKVLGIEAGEDVGGTWYWNRYPGCRLDTESYAYGYFALKGIIPEWEWSENFASQPEMLRYVNRAADAMDVRKHYRFNTRVTAARYVENDRLWEVTLDNEEVVTCRFLISATGPLSASRMPDIKGIDSFKGESFHSSRWPTDAEGAPKGVDFTGKRVGVIGTGATGVQIIPIAAETAKELYVFQRTPNWCTPLGNSPMSKEKMDSLRNRYPTILEYVKSTDTAFPYHRDPRKGTDVSESERDAFFEELYRQPGYGIWLSGFRDLLLNKESNKFLADFVAKKIRQRVKDPVVAEKLIPKDHPFGAKRVPMETNYYETYNRDNVHLVDIREAPIQEVTPEGIKTADAAYDLDVIIYATGFDAVTGSLDRIDIRGKDNVRLIDAWAEGPSTYLGLQARGFPNFFTLVGPHNGSTFCNVGVCGGLQAEWVLRMISYMKDNGFTYSEPTQAAENRWTEEVYADFSRTLLAEANAWWVKTTTKPDGSVVRRTLVHVSGGPEYRKRCEQVAYNNYNGFELA</sequence>
<reference key="1">
    <citation type="journal article" date="2012" name="Appl. Microbiol. Biotechnol.">
        <title>Completing the series of BVMOs involved in camphor metabolism of Pseudomonas putida NCIMB 10007 by identification of the two missing genes, their functional expression in E. coli, and biochemical characterization.</title>
        <authorList>
            <person name="Kadow M."/>
            <person name="Loschinski K."/>
            <person name="Sass S."/>
            <person name="Schmidt M."/>
            <person name="Bornscheuer U.T."/>
        </authorList>
    </citation>
    <scope>NUCLEOTIDE SEQUENCE [GENOMIC DNA]</scope>
    <scope>FUNCTION</scope>
    <scope>CATALYTIC ACTIVITY</scope>
    <scope>BIOPHYSICOCHEMICAL PROPERTIES</scope>
    <scope>SUBSTRATE SPECIFICITY</scope>
    <source>
        <strain>ATCC 17453 / DSM 50198 / JCM 6157 / NCIMB 10007 / NRRL B-4067 / Stanier 77 / Biotype A</strain>
    </source>
</reference>
<reference key="2">
    <citation type="journal article" date="2013" name="Appl. Environ. Microbiol.">
        <title>Camphor pathway redux: functional recombinant expression of 2,5- and 3,6-diketocamphane monooxygenases of Pseudomonas putida ATCC 17453 with their cognate flavin reductase catalyzing Baeyer-Villiger reactions.</title>
        <authorList>
            <person name="Iwaki H."/>
            <person name="Grosse S."/>
            <person name="Bergeron H."/>
            <person name="Leisch H."/>
            <person name="Morley K."/>
            <person name="Hasegawa Y."/>
            <person name="Lau P.C.K."/>
        </authorList>
    </citation>
    <scope>NUCLEOTIDE SEQUENCE [GENOMIC DNA]</scope>
    <source>
        <strain>ATCC 17453 / DSM 50198 / JCM 6157 / NCIMB 10007 / NRRL B-4067 / Stanier 77 / Biotype A</strain>
    </source>
</reference>
<reference key="3">
    <citation type="journal article" date="1983" name="J. Bacteriol.">
        <title>Camphor revisited: involvement of a unique monooxygenase in metabolism of 2-oxo-delta 3-4,5,5-trimethylcyclopentenylacetic acid by Pseudomonas putida.</title>
        <authorList>
            <person name="Ougham H.J."/>
            <person name="Taylor D.G."/>
            <person name="Trudgill P.W."/>
        </authorList>
    </citation>
    <scope>FUNCTION</scope>
    <scope>CATALYTIC ACTIVITY</scope>
    <scope>INDUCTION</scope>
    <scope>BIOPHYSICOCHEMICAL PROPERTIES</scope>
    <scope>COFACTOR</scope>
    <scope>SUBUNIT</scope>
</reference>
<reference key="4">
    <citation type="journal article" date="2012" name="Appl. Environ. Microbiol.">
        <title>Cloning, Baeyer-Villiger biooxidations, and structures of the camphor pathway 2-oxo-Delta(3)-4,5,5-trimethylcyclopentenylacetyl-coenzyme A monooxygenase of Pseudomonas putida ATCC 17453.</title>
        <authorList>
            <person name="Leisch H."/>
            <person name="Shi R."/>
            <person name="Grosse S."/>
            <person name="Morley K."/>
            <person name="Bergeron H."/>
            <person name="Cygler M."/>
            <person name="Iwaki H."/>
            <person name="Hasegawa Y."/>
            <person name="Lau P.C.K."/>
        </authorList>
    </citation>
    <scope>X-RAY CRYSTALLOGRAPHY (2.04 ANGSTROMS) IN COMPLEX WITH FAD AND NADP</scope>
    <scope>FUNCTION</scope>
    <scope>MUTAGENESIS OF TYR-53; ASP-59 AND ARG-337</scope>
    <scope>BIOPHYSICOCHEMICAL PROPERTIES</scope>
    <scope>SUBSTRATE SPECIFICITY</scope>
    <scope>COFACTOR</scope>
    <scope>SUBUNIT</scope>
    <source>
        <strain>ATCC 17453 / DSM 50198 / JCM 6157 / NCIMB 10007 / NRRL B-4067 / Stanier 77 / Biotype A</strain>
    </source>
</reference>
<keyword id="KW-0002">3D-structure</keyword>
<keyword id="KW-0274">FAD</keyword>
<keyword id="KW-0285">Flavoprotein</keyword>
<keyword id="KW-0503">Monooxygenase</keyword>
<keyword id="KW-0521">NADP</keyword>
<keyword id="KW-0560">Oxidoreductase</keyword>
<keyword id="KW-0614">Plasmid</keyword>
<name>OTEMO_PSEPU</name>